<organism>
    <name type="scientific">Oryza sativa subsp. japonica</name>
    <name type="common">Rice</name>
    <dbReference type="NCBI Taxonomy" id="39947"/>
    <lineage>
        <taxon>Eukaryota</taxon>
        <taxon>Viridiplantae</taxon>
        <taxon>Streptophyta</taxon>
        <taxon>Embryophyta</taxon>
        <taxon>Tracheophyta</taxon>
        <taxon>Spermatophyta</taxon>
        <taxon>Magnoliopsida</taxon>
        <taxon>Liliopsida</taxon>
        <taxon>Poales</taxon>
        <taxon>Poaceae</taxon>
        <taxon>BOP clade</taxon>
        <taxon>Oryzoideae</taxon>
        <taxon>Oryzeae</taxon>
        <taxon>Oryzinae</taxon>
        <taxon>Oryza</taxon>
        <taxon>Oryza sativa</taxon>
    </lineage>
</organism>
<proteinExistence type="evidence at transcript level"/>
<gene>
    <name evidence="5" type="primary">NEK4</name>
    <name evidence="9" type="ordered locus">Os05g0440800</name>
    <name evidence="6" type="ordered locus">LOC_Os05g36960</name>
    <name evidence="8" type="ORF">B1110B01.5</name>
    <name evidence="10" type="ORF">OsJ_18694</name>
</gene>
<comment type="function">
    <text evidence="7">May be involved in plant development processes.</text>
</comment>
<comment type="catalytic activity">
    <reaction evidence="6">
        <text>L-seryl-[protein] + ATP = O-phospho-L-seryl-[protein] + ADP + H(+)</text>
        <dbReference type="Rhea" id="RHEA:17989"/>
        <dbReference type="Rhea" id="RHEA-COMP:9863"/>
        <dbReference type="Rhea" id="RHEA-COMP:11604"/>
        <dbReference type="ChEBI" id="CHEBI:15378"/>
        <dbReference type="ChEBI" id="CHEBI:29999"/>
        <dbReference type="ChEBI" id="CHEBI:30616"/>
        <dbReference type="ChEBI" id="CHEBI:83421"/>
        <dbReference type="ChEBI" id="CHEBI:456216"/>
        <dbReference type="EC" id="2.7.11.1"/>
    </reaction>
</comment>
<comment type="catalytic activity">
    <reaction evidence="6">
        <text>L-threonyl-[protein] + ATP = O-phospho-L-threonyl-[protein] + ADP + H(+)</text>
        <dbReference type="Rhea" id="RHEA:46608"/>
        <dbReference type="Rhea" id="RHEA-COMP:11060"/>
        <dbReference type="Rhea" id="RHEA-COMP:11605"/>
        <dbReference type="ChEBI" id="CHEBI:15378"/>
        <dbReference type="ChEBI" id="CHEBI:30013"/>
        <dbReference type="ChEBI" id="CHEBI:30616"/>
        <dbReference type="ChEBI" id="CHEBI:61977"/>
        <dbReference type="ChEBI" id="CHEBI:456216"/>
        <dbReference type="EC" id="2.7.11.1"/>
    </reaction>
</comment>
<comment type="tissue specificity">
    <text evidence="4">Expressed in anthers, pistils and leaves.</text>
</comment>
<comment type="similarity">
    <text evidence="6">Belongs to the protein kinase superfamily. NEK Ser/Thr protein kinase family. NIMA subfamily.</text>
</comment>
<protein>
    <recommendedName>
        <fullName evidence="6">Serine/threonine-protein kinase Nek4</fullName>
        <ecNumber evidence="6">2.7.11.1</ecNumber>
    </recommendedName>
    <alternativeName>
        <fullName evidence="5">NimA-related protein kinase 4</fullName>
    </alternativeName>
    <alternativeName>
        <fullName evidence="5">OsNek4</fullName>
    </alternativeName>
</protein>
<sequence>MESRMDQYEIMEQVGRGAFGAAILVNHKIERKKYVLKKIRLARQTERCRKSAHQEMALIARLQHPYIVEFKEAWVEKGCYVCIVTGYCEGGDMDELMKKLNGTYFPEEKLLKWFAQLVLAVDYLHSNYVLHRDLKCSNIFLTKDQDIRLGDFGLAKTLKEDDLTSSVVGTPNYMCPELLTDIPYGFKSDIWSLGCCMYEMAAHRPAFKAFDMAGLISKINRSSIGPLPACYSSSMKTLIKSMLRKSPEHRPTASEILKNPYLQPYVNQCRPLSDAPTPIRMPEKPLSTSRSNQRCTSESQSSSISCSDIDSTQSSDRSTSGGAPSTDSKLNDIRSIQDADRADSDEKCVTPEDLRGNKNISGAELKRQDSSKSVHQHHRGESKQPKIIEKIMTTLREESRLRENNSPVSSSGVKLTSAVSNKNQAEQSSESSRPHSGVSYSSKFGDISSNGWTNTSDECVDPVQVPLQLKQLSPTVEHCPKLKNSGSSTPEPAKQIAENGSSASGMSKTKSSPSSSRRPSPQRQTVAGIPIVPFTVSKRAHIKAESEKTPPRPAHSPNNSLHNLPPLIPISTNLSEENIKLGNSQAMPAPLEFVTAASKEDISFYSNSVVDCVEKAEPSEVFESNSPAYLTPPWTGPVLDAKGENGLIAIPCSEIHTGTLQKSMASNDDSSLSSPLDTFYLSFEQEFVCKDDSQSSKHGHSAVTLLSGEDKFTVQELLASTPVISPFVSSTSNTLPEDKSSYQSFKKQSDSHSGPPVDVPAQTIRLNSFLVSDEWPTSETVQGEARDTAASKLLNVVREDFDVRSSSCSTSTQPSGQTPVRSKLNVPETNLASNISIPSISEAVRLSTAMDVKPYTSEASNGVKEEASPAKEALDVTSFRQRAEALEGLLELSADLLENNRLEELAIVLQPFGKNKVSPRETAIWLARSFKGMMNEEGGRLSM</sequence>
<dbReference type="EC" id="2.7.11.1" evidence="6"/>
<dbReference type="EMBL" id="AC147462">
    <property type="protein sequence ID" value="AAU90090.1"/>
    <property type="molecule type" value="Genomic_DNA"/>
</dbReference>
<dbReference type="EMBL" id="AP008211">
    <property type="protein sequence ID" value="BAF17583.1"/>
    <property type="molecule type" value="Genomic_DNA"/>
</dbReference>
<dbReference type="EMBL" id="AP014961">
    <property type="protein sequence ID" value="BAS94240.1"/>
    <property type="molecule type" value="Genomic_DNA"/>
</dbReference>
<dbReference type="EMBL" id="CM000142">
    <property type="protein sequence ID" value="EEE63870.1"/>
    <property type="molecule type" value="Genomic_DNA"/>
</dbReference>
<dbReference type="EMBL" id="AK073901">
    <property type="status" value="NOT_ANNOTATED_CDS"/>
    <property type="molecule type" value="mRNA"/>
</dbReference>
<dbReference type="RefSeq" id="XP_015637651.1">
    <property type="nucleotide sequence ID" value="XM_015782165.1"/>
</dbReference>
<dbReference type="RefSeq" id="XP_015637652.1">
    <property type="nucleotide sequence ID" value="XM_015782166.1"/>
</dbReference>
<dbReference type="SMR" id="Q60DG4"/>
<dbReference type="FunCoup" id="Q60DG4">
    <property type="interactions" value="1385"/>
</dbReference>
<dbReference type="STRING" id="39947.Q60DG4"/>
<dbReference type="PaxDb" id="39947-Q60DG4"/>
<dbReference type="EnsemblPlants" id="Os05t0440800-01">
    <property type="protein sequence ID" value="Os05t0440800-01"/>
    <property type="gene ID" value="Os05g0440800"/>
</dbReference>
<dbReference type="GeneID" id="4338922"/>
<dbReference type="Gramene" id="Os05t0440800-01">
    <property type="protein sequence ID" value="Os05t0440800-01"/>
    <property type="gene ID" value="Os05g0440800"/>
</dbReference>
<dbReference type="KEGG" id="dosa:Os05g0440800"/>
<dbReference type="KEGG" id="osa:4338922"/>
<dbReference type="eggNOG" id="KOG0589">
    <property type="taxonomic scope" value="Eukaryota"/>
</dbReference>
<dbReference type="HOGENOM" id="CLU_000288_128_0_1"/>
<dbReference type="InParanoid" id="Q60DG4"/>
<dbReference type="OMA" id="VSDEWPT"/>
<dbReference type="OrthoDB" id="248923at2759"/>
<dbReference type="Proteomes" id="UP000000763">
    <property type="component" value="Chromosome 5"/>
</dbReference>
<dbReference type="Proteomes" id="UP000007752">
    <property type="component" value="Chromosome 5"/>
</dbReference>
<dbReference type="Proteomes" id="UP000059680">
    <property type="component" value="Chromosome 5"/>
</dbReference>
<dbReference type="GO" id="GO:0055028">
    <property type="term" value="C:cortical microtubule"/>
    <property type="evidence" value="ECO:0000318"/>
    <property type="project" value="GO_Central"/>
</dbReference>
<dbReference type="GO" id="GO:0005524">
    <property type="term" value="F:ATP binding"/>
    <property type="evidence" value="ECO:0007669"/>
    <property type="project" value="UniProtKB-KW"/>
</dbReference>
<dbReference type="GO" id="GO:0106310">
    <property type="term" value="F:protein serine kinase activity"/>
    <property type="evidence" value="ECO:0007669"/>
    <property type="project" value="RHEA"/>
</dbReference>
<dbReference type="GO" id="GO:0004674">
    <property type="term" value="F:protein serine/threonine kinase activity"/>
    <property type="evidence" value="ECO:0000318"/>
    <property type="project" value="GO_Central"/>
</dbReference>
<dbReference type="GO" id="GO:0043622">
    <property type="term" value="P:cortical microtubule organization"/>
    <property type="evidence" value="ECO:0007669"/>
    <property type="project" value="EnsemblPlants"/>
</dbReference>
<dbReference type="GO" id="GO:0007017">
    <property type="term" value="P:microtubule-based process"/>
    <property type="evidence" value="ECO:0000318"/>
    <property type="project" value="GO_Central"/>
</dbReference>
<dbReference type="CDD" id="cd08215">
    <property type="entry name" value="STKc_Nek"/>
    <property type="match status" value="1"/>
</dbReference>
<dbReference type="FunFam" id="3.30.200.20:FF:000108">
    <property type="entry name" value="Serine/threonine-protein kinase Nek2"/>
    <property type="match status" value="1"/>
</dbReference>
<dbReference type="FunFam" id="1.10.510.10:FF:000504">
    <property type="entry name" value="Serine/threonine-protein kinase Nek5"/>
    <property type="match status" value="1"/>
</dbReference>
<dbReference type="Gene3D" id="3.30.200.20">
    <property type="entry name" value="Phosphorylase Kinase, domain 1"/>
    <property type="match status" value="1"/>
</dbReference>
<dbReference type="Gene3D" id="1.10.510.10">
    <property type="entry name" value="Transferase(Phosphotransferase) domain 1"/>
    <property type="match status" value="1"/>
</dbReference>
<dbReference type="InterPro" id="IPR011009">
    <property type="entry name" value="Kinase-like_dom_sf"/>
</dbReference>
<dbReference type="InterPro" id="IPR050660">
    <property type="entry name" value="NEK_Ser/Thr_kinase"/>
</dbReference>
<dbReference type="InterPro" id="IPR000719">
    <property type="entry name" value="Prot_kinase_dom"/>
</dbReference>
<dbReference type="InterPro" id="IPR017441">
    <property type="entry name" value="Protein_kinase_ATP_BS"/>
</dbReference>
<dbReference type="InterPro" id="IPR008271">
    <property type="entry name" value="Ser/Thr_kinase_AS"/>
</dbReference>
<dbReference type="PANTHER" id="PTHR43671">
    <property type="entry name" value="SERINE/THREONINE-PROTEIN KINASE NEK"/>
    <property type="match status" value="1"/>
</dbReference>
<dbReference type="PANTHER" id="PTHR43671:SF97">
    <property type="entry name" value="SERINE_THREONINE-PROTEIN KINASE NEK4"/>
    <property type="match status" value="1"/>
</dbReference>
<dbReference type="Pfam" id="PF00069">
    <property type="entry name" value="Pkinase"/>
    <property type="match status" value="1"/>
</dbReference>
<dbReference type="SMART" id="SM00220">
    <property type="entry name" value="S_TKc"/>
    <property type="match status" value="1"/>
</dbReference>
<dbReference type="SUPFAM" id="SSF56112">
    <property type="entry name" value="Protein kinase-like (PK-like)"/>
    <property type="match status" value="1"/>
</dbReference>
<dbReference type="PROSITE" id="PS00107">
    <property type="entry name" value="PROTEIN_KINASE_ATP"/>
    <property type="match status" value="1"/>
</dbReference>
<dbReference type="PROSITE" id="PS50011">
    <property type="entry name" value="PROTEIN_KINASE_DOM"/>
    <property type="match status" value="1"/>
</dbReference>
<dbReference type="PROSITE" id="PS00108">
    <property type="entry name" value="PROTEIN_KINASE_ST"/>
    <property type="match status" value="1"/>
</dbReference>
<evidence type="ECO:0000255" key="1">
    <source>
        <dbReference type="PROSITE-ProRule" id="PRU00159"/>
    </source>
</evidence>
<evidence type="ECO:0000255" key="2">
    <source>
        <dbReference type="PROSITE-ProRule" id="PRU10027"/>
    </source>
</evidence>
<evidence type="ECO:0000256" key="3">
    <source>
        <dbReference type="SAM" id="MobiDB-lite"/>
    </source>
</evidence>
<evidence type="ECO:0000269" key="4">
    <source>
    </source>
</evidence>
<evidence type="ECO:0000303" key="5">
    <source>
    </source>
</evidence>
<evidence type="ECO:0000305" key="6"/>
<evidence type="ECO:0000305" key="7">
    <source>
    </source>
</evidence>
<evidence type="ECO:0000312" key="8">
    <source>
        <dbReference type="EMBL" id="AAU90090.1"/>
    </source>
</evidence>
<evidence type="ECO:0000312" key="9">
    <source>
        <dbReference type="EMBL" id="BAS94240.1"/>
    </source>
</evidence>
<evidence type="ECO:0000312" key="10">
    <source>
        <dbReference type="EMBL" id="EEE63870.1"/>
    </source>
</evidence>
<feature type="chain" id="PRO_0000314048" description="Serine/threonine-protein kinase Nek4">
    <location>
        <begin position="1"/>
        <end position="943"/>
    </location>
</feature>
<feature type="domain" description="Protein kinase" evidence="1">
    <location>
        <begin position="8"/>
        <end position="262"/>
    </location>
</feature>
<feature type="region of interest" description="Disordered" evidence="3">
    <location>
        <begin position="272"/>
        <end position="447"/>
    </location>
</feature>
<feature type="region of interest" description="Disordered" evidence="3">
    <location>
        <begin position="478"/>
        <end position="565"/>
    </location>
</feature>
<feature type="region of interest" description="Disordered" evidence="3">
    <location>
        <begin position="728"/>
        <end position="759"/>
    </location>
</feature>
<feature type="region of interest" description="Disordered" evidence="3">
    <location>
        <begin position="804"/>
        <end position="824"/>
    </location>
</feature>
<feature type="compositionally biased region" description="Low complexity" evidence="3">
    <location>
        <begin position="295"/>
        <end position="315"/>
    </location>
</feature>
<feature type="compositionally biased region" description="Polar residues" evidence="3">
    <location>
        <begin position="316"/>
        <end position="328"/>
    </location>
</feature>
<feature type="compositionally biased region" description="Basic and acidic residues" evidence="3">
    <location>
        <begin position="329"/>
        <end position="356"/>
    </location>
</feature>
<feature type="compositionally biased region" description="Basic and acidic residues" evidence="3">
    <location>
        <begin position="379"/>
        <end position="403"/>
    </location>
</feature>
<feature type="compositionally biased region" description="Polar residues" evidence="3">
    <location>
        <begin position="404"/>
        <end position="431"/>
    </location>
</feature>
<feature type="compositionally biased region" description="Polar residues" evidence="3">
    <location>
        <begin position="438"/>
        <end position="447"/>
    </location>
</feature>
<feature type="compositionally biased region" description="Low complexity" evidence="3">
    <location>
        <begin position="500"/>
        <end position="519"/>
    </location>
</feature>
<feature type="compositionally biased region" description="Polar residues" evidence="3">
    <location>
        <begin position="728"/>
        <end position="746"/>
    </location>
</feature>
<feature type="compositionally biased region" description="Low complexity" evidence="3">
    <location>
        <begin position="805"/>
        <end position="819"/>
    </location>
</feature>
<feature type="active site" description="Proton acceptor" evidence="1 2">
    <location>
        <position position="133"/>
    </location>
</feature>
<feature type="binding site" evidence="1">
    <location>
        <begin position="14"/>
        <end position="22"/>
    </location>
    <ligand>
        <name>ATP</name>
        <dbReference type="ChEBI" id="CHEBI:30616"/>
    </ligand>
</feature>
<feature type="binding site" evidence="1">
    <location>
        <position position="37"/>
    </location>
    <ligand>
        <name>ATP</name>
        <dbReference type="ChEBI" id="CHEBI:30616"/>
    </ligand>
</feature>
<feature type="sequence conflict" description="In Ref. 6; AK073901." evidence="6" ref="6">
    <original>G</original>
    <variation>D</variation>
    <location>
        <position position="90"/>
    </location>
</feature>
<feature type="sequence conflict" description="In Ref. 6; AK073901." evidence="6" ref="6">
    <original>K</original>
    <variation>N</variation>
    <location>
        <position position="284"/>
    </location>
</feature>
<accession>Q60DG4</accession>
<accession>B9FPU0</accession>
<reference key="1">
    <citation type="journal article" date="2005" name="Mol. Genet. Genomics">
        <title>A fine physical map of the rice chromosome 5.</title>
        <authorList>
            <person name="Cheng C.-H."/>
            <person name="Chung M.C."/>
            <person name="Liu S.-M."/>
            <person name="Chen S.-K."/>
            <person name="Kao F.Y."/>
            <person name="Lin S.-J."/>
            <person name="Hsiao S.-H."/>
            <person name="Tseng I.C."/>
            <person name="Hsing Y.-I.C."/>
            <person name="Wu H.-P."/>
            <person name="Chen C.-S."/>
            <person name="Shaw J.-F."/>
            <person name="Wu J."/>
            <person name="Matsumoto T."/>
            <person name="Sasaki T."/>
            <person name="Chen H.-C."/>
            <person name="Chow T.-Y."/>
        </authorList>
    </citation>
    <scope>NUCLEOTIDE SEQUENCE [LARGE SCALE GENOMIC DNA]</scope>
    <source>
        <strain>cv. Nipponbare</strain>
    </source>
</reference>
<reference key="2">
    <citation type="journal article" date="2005" name="Nature">
        <title>The map-based sequence of the rice genome.</title>
        <authorList>
            <consortium name="International rice genome sequencing project (IRGSP)"/>
        </authorList>
    </citation>
    <scope>NUCLEOTIDE SEQUENCE [LARGE SCALE GENOMIC DNA]</scope>
    <source>
        <strain>cv. Nipponbare</strain>
    </source>
</reference>
<reference key="3">
    <citation type="journal article" date="2008" name="Nucleic Acids Res.">
        <title>The rice annotation project database (RAP-DB): 2008 update.</title>
        <authorList>
            <consortium name="The rice annotation project (RAP)"/>
        </authorList>
    </citation>
    <scope>GENOME REANNOTATION</scope>
    <source>
        <strain>cv. Nipponbare</strain>
    </source>
</reference>
<reference key="4">
    <citation type="journal article" date="2013" name="Rice">
        <title>Improvement of the Oryza sativa Nipponbare reference genome using next generation sequence and optical map data.</title>
        <authorList>
            <person name="Kawahara Y."/>
            <person name="de la Bastide M."/>
            <person name="Hamilton J.P."/>
            <person name="Kanamori H."/>
            <person name="McCombie W.R."/>
            <person name="Ouyang S."/>
            <person name="Schwartz D.C."/>
            <person name="Tanaka T."/>
            <person name="Wu J."/>
            <person name="Zhou S."/>
            <person name="Childs K.L."/>
            <person name="Davidson R.M."/>
            <person name="Lin H."/>
            <person name="Quesada-Ocampo L."/>
            <person name="Vaillancourt B."/>
            <person name="Sakai H."/>
            <person name="Lee S.S."/>
            <person name="Kim J."/>
            <person name="Numa H."/>
            <person name="Itoh T."/>
            <person name="Buell C.R."/>
            <person name="Matsumoto T."/>
        </authorList>
    </citation>
    <scope>GENOME REANNOTATION</scope>
    <source>
        <strain>cv. Nipponbare</strain>
    </source>
</reference>
<reference key="5">
    <citation type="journal article" date="2005" name="PLoS Biol.">
        <title>The genomes of Oryza sativa: a history of duplications.</title>
        <authorList>
            <person name="Yu J."/>
            <person name="Wang J."/>
            <person name="Lin W."/>
            <person name="Li S."/>
            <person name="Li H."/>
            <person name="Zhou J."/>
            <person name="Ni P."/>
            <person name="Dong W."/>
            <person name="Hu S."/>
            <person name="Zeng C."/>
            <person name="Zhang J."/>
            <person name="Zhang Y."/>
            <person name="Li R."/>
            <person name="Xu Z."/>
            <person name="Li S."/>
            <person name="Li X."/>
            <person name="Zheng H."/>
            <person name="Cong L."/>
            <person name="Lin L."/>
            <person name="Yin J."/>
            <person name="Geng J."/>
            <person name="Li G."/>
            <person name="Shi J."/>
            <person name="Liu J."/>
            <person name="Lv H."/>
            <person name="Li J."/>
            <person name="Wang J."/>
            <person name="Deng Y."/>
            <person name="Ran L."/>
            <person name="Shi X."/>
            <person name="Wang X."/>
            <person name="Wu Q."/>
            <person name="Li C."/>
            <person name="Ren X."/>
            <person name="Wang J."/>
            <person name="Wang X."/>
            <person name="Li D."/>
            <person name="Liu D."/>
            <person name="Zhang X."/>
            <person name="Ji Z."/>
            <person name="Zhao W."/>
            <person name="Sun Y."/>
            <person name="Zhang Z."/>
            <person name="Bao J."/>
            <person name="Han Y."/>
            <person name="Dong L."/>
            <person name="Ji J."/>
            <person name="Chen P."/>
            <person name="Wu S."/>
            <person name="Liu J."/>
            <person name="Xiao Y."/>
            <person name="Bu D."/>
            <person name="Tan J."/>
            <person name="Yang L."/>
            <person name="Ye C."/>
            <person name="Zhang J."/>
            <person name="Xu J."/>
            <person name="Zhou Y."/>
            <person name="Yu Y."/>
            <person name="Zhang B."/>
            <person name="Zhuang S."/>
            <person name="Wei H."/>
            <person name="Liu B."/>
            <person name="Lei M."/>
            <person name="Yu H."/>
            <person name="Li Y."/>
            <person name="Xu H."/>
            <person name="Wei S."/>
            <person name="He X."/>
            <person name="Fang L."/>
            <person name="Zhang Z."/>
            <person name="Zhang Y."/>
            <person name="Huang X."/>
            <person name="Su Z."/>
            <person name="Tong W."/>
            <person name="Li J."/>
            <person name="Tong Z."/>
            <person name="Li S."/>
            <person name="Ye J."/>
            <person name="Wang L."/>
            <person name="Fang L."/>
            <person name="Lei T."/>
            <person name="Chen C.-S."/>
            <person name="Chen H.-C."/>
            <person name="Xu Z."/>
            <person name="Li H."/>
            <person name="Huang H."/>
            <person name="Zhang F."/>
            <person name="Xu H."/>
            <person name="Li N."/>
            <person name="Zhao C."/>
            <person name="Li S."/>
            <person name="Dong L."/>
            <person name="Huang Y."/>
            <person name="Li L."/>
            <person name="Xi Y."/>
            <person name="Qi Q."/>
            <person name="Li W."/>
            <person name="Zhang B."/>
            <person name="Hu W."/>
            <person name="Zhang Y."/>
            <person name="Tian X."/>
            <person name="Jiao Y."/>
            <person name="Liang X."/>
            <person name="Jin J."/>
            <person name="Gao L."/>
            <person name="Zheng W."/>
            <person name="Hao B."/>
            <person name="Liu S.-M."/>
            <person name="Wang W."/>
            <person name="Yuan L."/>
            <person name="Cao M."/>
            <person name="McDermott J."/>
            <person name="Samudrala R."/>
            <person name="Wang J."/>
            <person name="Wong G.K.-S."/>
            <person name="Yang H."/>
        </authorList>
    </citation>
    <scope>NUCLEOTIDE SEQUENCE [LARGE SCALE GENOMIC DNA]</scope>
    <source>
        <strain>cv. Nipponbare</strain>
    </source>
</reference>
<reference key="6">
    <citation type="journal article" date="2003" name="Science">
        <title>Collection, mapping, and annotation of over 28,000 cDNA clones from japonica rice.</title>
        <authorList>
            <consortium name="The rice full-length cDNA consortium"/>
        </authorList>
    </citation>
    <scope>NUCLEOTIDE SEQUENCE [LARGE SCALE MRNA]</scope>
    <source>
        <strain>cv. Nipponbare</strain>
    </source>
</reference>
<reference key="7">
    <citation type="journal article" date="2007" name="Plant J.">
        <title>Members of the plant NIMA-related kinases are involved in organ development and vascularization in poplar, Arabidopsis and rice.</title>
        <authorList>
            <person name="Vigneault F."/>
            <person name="Lachance D."/>
            <person name="Cloutier M."/>
            <person name="Pelletier G."/>
            <person name="Levasseur C."/>
            <person name="Seguin A."/>
        </authorList>
    </citation>
    <scope>FUNCTION</scope>
    <scope>GENE FAMILY</scope>
    <scope>NOMENCLATURE</scope>
</reference>
<reference key="8">
    <citation type="journal article" date="2009" name="Plant Cell Physiol.">
        <title>Cytoplasmic male sterility-related protein kinase, OsNek3, is regulated downstream of mitochondrial protein phosphatase 2C, DCW11.</title>
        <authorList>
            <person name="Fujii S."/>
            <person name="Yamada M."/>
            <person name="Toriyama K."/>
        </authorList>
    </citation>
    <scope>TISSUE SPECIFICITY</scope>
</reference>
<keyword id="KW-0067">ATP-binding</keyword>
<keyword id="KW-0418">Kinase</keyword>
<keyword id="KW-0547">Nucleotide-binding</keyword>
<keyword id="KW-1185">Reference proteome</keyword>
<keyword id="KW-0723">Serine/threonine-protein kinase</keyword>
<keyword id="KW-0808">Transferase</keyword>
<name>NEK4_ORYSJ</name>